<protein>
    <recommendedName>
        <fullName evidence="1">Ribulose bisphosphate carboxylase large chain 2</fullName>
        <shortName evidence="1">RuBisCO large subunit 2</shortName>
        <ecNumber evidence="1">4.1.1.39</ecNumber>
    </recommendedName>
</protein>
<reference key="1">
    <citation type="journal article" date="2007" name="J. Bacteriol.">
        <title>Whole-genome analysis of the methyl tert-butyl ether-degrading beta-proteobacterium Methylibium petroleiphilum PM1.</title>
        <authorList>
            <person name="Kane S.R."/>
            <person name="Chakicherla A.Y."/>
            <person name="Chain P.S.G."/>
            <person name="Schmidt R."/>
            <person name="Shin M.W."/>
            <person name="Legler T.C."/>
            <person name="Scow K.M."/>
            <person name="Larimer F.W."/>
            <person name="Lucas S.M."/>
            <person name="Richardson P.M."/>
            <person name="Hristova K.R."/>
        </authorList>
    </citation>
    <scope>NUCLEOTIDE SEQUENCE [LARGE SCALE GENOMIC DNA]</scope>
    <source>
        <strain>ATCC BAA-1232 / LMG 22953 / PM1</strain>
    </source>
</reference>
<evidence type="ECO:0000255" key="1">
    <source>
        <dbReference type="HAMAP-Rule" id="MF_01338"/>
    </source>
</evidence>
<evidence type="ECO:0000305" key="2"/>
<accession>A2SJJ7</accession>
<gene>
    <name evidence="1" type="primary">cbbL2</name>
    <name type="ordered locus">Mpe_A2782</name>
</gene>
<comment type="function">
    <text evidence="1">RuBisCO catalyzes two reactions: the carboxylation of D-ribulose 1,5-bisphosphate, the primary event in carbon dioxide fixation, as well as the oxidative fragmentation of the pentose substrate. Both reactions occur simultaneously and in competition at the same active site.</text>
</comment>
<comment type="catalytic activity">
    <reaction evidence="1">
        <text>2 (2R)-3-phosphoglycerate + 2 H(+) = D-ribulose 1,5-bisphosphate + CO2 + H2O</text>
        <dbReference type="Rhea" id="RHEA:23124"/>
        <dbReference type="ChEBI" id="CHEBI:15377"/>
        <dbReference type="ChEBI" id="CHEBI:15378"/>
        <dbReference type="ChEBI" id="CHEBI:16526"/>
        <dbReference type="ChEBI" id="CHEBI:57870"/>
        <dbReference type="ChEBI" id="CHEBI:58272"/>
        <dbReference type="EC" id="4.1.1.39"/>
    </reaction>
</comment>
<comment type="catalytic activity">
    <reaction evidence="1">
        <text>D-ribulose 1,5-bisphosphate + O2 = 2-phosphoglycolate + (2R)-3-phosphoglycerate + 2 H(+)</text>
        <dbReference type="Rhea" id="RHEA:36631"/>
        <dbReference type="ChEBI" id="CHEBI:15378"/>
        <dbReference type="ChEBI" id="CHEBI:15379"/>
        <dbReference type="ChEBI" id="CHEBI:57870"/>
        <dbReference type="ChEBI" id="CHEBI:58033"/>
        <dbReference type="ChEBI" id="CHEBI:58272"/>
    </reaction>
</comment>
<comment type="cofactor">
    <cofactor evidence="1">
        <name>Mg(2+)</name>
        <dbReference type="ChEBI" id="CHEBI:18420"/>
    </cofactor>
    <text evidence="1">Binds 1 Mg(2+) ion per subunit.</text>
</comment>
<comment type="subunit">
    <text evidence="1">Heterohexadecamer of 8 large chains and 8 small chains.</text>
</comment>
<comment type="miscellaneous">
    <text evidence="1">The basic functional RuBisCO is composed of a large chain homodimer in a 'head-to-tail' conformation. In form I RuBisCO this homodimer is arranged in a barrel-like tetramer with the small subunits forming a tetrameric 'cap' on each end of the 'barrel'.</text>
</comment>
<comment type="similarity">
    <text evidence="1">Belongs to the RuBisCO large chain family. Type I subfamily.</text>
</comment>
<comment type="sequence caution" evidence="2">
    <conflict type="erroneous initiation">
        <sequence resource="EMBL-CDS" id="ABM95736"/>
    </conflict>
</comment>
<sequence length="485" mass="53310">MNEPTQITDTKKRYAAGVLKYAQMGYWNGDYVPKDTDILALFRITPQDGVDPIEAAAAVAGESSTATWTVVWTDRLTACDMYRAKAYKVEPVPNNPGQYFCYVAYDLSLFEEGSIANVTASIIGNVFSFKPLKAARLEDMKFPVSYVKTFAGPPTGIVVERERLDKFGRPLLGATTKPKLGLSGRNYGRVVYEGLKGGLDFMKDDENINSQPFMHWRDRFLFVMDAVNKASAATGEVKGSYLNVTAGTMEEMYRRAEFAKELGSVIIMIDLVVGYTAIQSMSNWARQNDMVLHMHRAGHGTYTRQKNHGVSFRVIAKWLRMAGVDHLHTGTAVGKLEGDPLTVQGYYNVCRDTHTKVDLPRGIFFDQDWGALKKVMPVASGGIHAGQMHQLIDLFGDDVVLQFGGGTIGHPQGIQAGATANRVALEAMVLARNEGRDIKNEGPQILRDAAKSCTPLAAALDTWGDITFNYTSTDTSDYVPTPSVA</sequence>
<name>RBL1B_METPP</name>
<dbReference type="EC" id="4.1.1.39" evidence="1"/>
<dbReference type="EMBL" id="CP000555">
    <property type="protein sequence ID" value="ABM95736.1"/>
    <property type="status" value="ALT_INIT"/>
    <property type="molecule type" value="Genomic_DNA"/>
</dbReference>
<dbReference type="SMR" id="A2SJJ7"/>
<dbReference type="STRING" id="420662.Mpe_A2782"/>
<dbReference type="KEGG" id="mpt:Mpe_A2782"/>
<dbReference type="eggNOG" id="COG1850">
    <property type="taxonomic scope" value="Bacteria"/>
</dbReference>
<dbReference type="HOGENOM" id="CLU_031450_2_0_4"/>
<dbReference type="Proteomes" id="UP000000366">
    <property type="component" value="Chromosome"/>
</dbReference>
<dbReference type="GO" id="GO:0000287">
    <property type="term" value="F:magnesium ion binding"/>
    <property type="evidence" value="ECO:0007669"/>
    <property type="project" value="UniProtKB-UniRule"/>
</dbReference>
<dbReference type="GO" id="GO:0004497">
    <property type="term" value="F:monooxygenase activity"/>
    <property type="evidence" value="ECO:0007669"/>
    <property type="project" value="UniProtKB-KW"/>
</dbReference>
<dbReference type="GO" id="GO:0016984">
    <property type="term" value="F:ribulose-bisphosphate carboxylase activity"/>
    <property type="evidence" value="ECO:0007669"/>
    <property type="project" value="UniProtKB-UniRule"/>
</dbReference>
<dbReference type="GO" id="GO:0019253">
    <property type="term" value="P:reductive pentose-phosphate cycle"/>
    <property type="evidence" value="ECO:0007669"/>
    <property type="project" value="UniProtKB-UniRule"/>
</dbReference>
<dbReference type="CDD" id="cd08212">
    <property type="entry name" value="RuBisCO_large_I"/>
    <property type="match status" value="1"/>
</dbReference>
<dbReference type="Gene3D" id="3.20.20.110">
    <property type="entry name" value="Ribulose bisphosphate carboxylase, large subunit, C-terminal domain"/>
    <property type="match status" value="1"/>
</dbReference>
<dbReference type="Gene3D" id="3.30.70.150">
    <property type="entry name" value="RuBisCO large subunit, N-terminal domain"/>
    <property type="match status" value="1"/>
</dbReference>
<dbReference type="HAMAP" id="MF_01338">
    <property type="entry name" value="RuBisCO_L_type1"/>
    <property type="match status" value="1"/>
</dbReference>
<dbReference type="InterPro" id="IPR033966">
    <property type="entry name" value="RuBisCO"/>
</dbReference>
<dbReference type="InterPro" id="IPR020878">
    <property type="entry name" value="RuBisCo_large_chain_AS"/>
</dbReference>
<dbReference type="InterPro" id="IPR000685">
    <property type="entry name" value="RuBisCO_lsu_C"/>
</dbReference>
<dbReference type="InterPro" id="IPR036376">
    <property type="entry name" value="RuBisCO_lsu_C_sf"/>
</dbReference>
<dbReference type="InterPro" id="IPR017443">
    <property type="entry name" value="RuBisCO_lsu_fd_N"/>
</dbReference>
<dbReference type="InterPro" id="IPR036422">
    <property type="entry name" value="RuBisCO_lsu_N_sf"/>
</dbReference>
<dbReference type="InterPro" id="IPR020888">
    <property type="entry name" value="RuBisCO_lsuI"/>
</dbReference>
<dbReference type="NCBIfam" id="NF003252">
    <property type="entry name" value="PRK04208.1"/>
    <property type="match status" value="1"/>
</dbReference>
<dbReference type="PANTHER" id="PTHR42704">
    <property type="entry name" value="RIBULOSE BISPHOSPHATE CARBOXYLASE"/>
    <property type="match status" value="1"/>
</dbReference>
<dbReference type="PANTHER" id="PTHR42704:SF17">
    <property type="entry name" value="RIBULOSE BISPHOSPHATE CARBOXYLASE LARGE CHAIN"/>
    <property type="match status" value="1"/>
</dbReference>
<dbReference type="Pfam" id="PF00016">
    <property type="entry name" value="RuBisCO_large"/>
    <property type="match status" value="1"/>
</dbReference>
<dbReference type="Pfam" id="PF02788">
    <property type="entry name" value="RuBisCO_large_N"/>
    <property type="match status" value="1"/>
</dbReference>
<dbReference type="SFLD" id="SFLDG01052">
    <property type="entry name" value="RuBisCO"/>
    <property type="match status" value="1"/>
</dbReference>
<dbReference type="SFLD" id="SFLDS00014">
    <property type="entry name" value="RuBisCO"/>
    <property type="match status" value="1"/>
</dbReference>
<dbReference type="SFLD" id="SFLDG00301">
    <property type="entry name" value="RuBisCO-like_proteins"/>
    <property type="match status" value="1"/>
</dbReference>
<dbReference type="SUPFAM" id="SSF51649">
    <property type="entry name" value="RuBisCo, C-terminal domain"/>
    <property type="match status" value="1"/>
</dbReference>
<dbReference type="SUPFAM" id="SSF54966">
    <property type="entry name" value="RuBisCO, large subunit, small (N-terminal) domain"/>
    <property type="match status" value="1"/>
</dbReference>
<dbReference type="PROSITE" id="PS00157">
    <property type="entry name" value="RUBISCO_LARGE"/>
    <property type="match status" value="1"/>
</dbReference>
<organism>
    <name type="scientific">Methylibium petroleiphilum (strain ATCC BAA-1232 / LMG 22953 / PM1)</name>
    <dbReference type="NCBI Taxonomy" id="420662"/>
    <lineage>
        <taxon>Bacteria</taxon>
        <taxon>Pseudomonadati</taxon>
        <taxon>Pseudomonadota</taxon>
        <taxon>Betaproteobacteria</taxon>
        <taxon>Burkholderiales</taxon>
        <taxon>Sphaerotilaceae</taxon>
        <taxon>Methylibium</taxon>
    </lineage>
</organism>
<feature type="chain" id="PRO_0000299965" description="Ribulose bisphosphate carboxylase large chain 2">
    <location>
        <begin position="1"/>
        <end position="485"/>
    </location>
</feature>
<feature type="active site" description="Proton acceptor" evidence="1">
    <location>
        <position position="177"/>
    </location>
</feature>
<feature type="active site" description="Proton acceptor" evidence="1">
    <location>
        <position position="295"/>
    </location>
</feature>
<feature type="binding site" description="in homodimeric partner" evidence="1">
    <location>
        <position position="125"/>
    </location>
    <ligand>
        <name>substrate</name>
    </ligand>
</feature>
<feature type="binding site" evidence="1">
    <location>
        <position position="175"/>
    </location>
    <ligand>
        <name>substrate</name>
    </ligand>
</feature>
<feature type="binding site" evidence="1">
    <location>
        <position position="179"/>
    </location>
    <ligand>
        <name>substrate</name>
    </ligand>
</feature>
<feature type="binding site" description="via carbamate group" evidence="1">
    <location>
        <position position="203"/>
    </location>
    <ligand>
        <name>Mg(2+)</name>
        <dbReference type="ChEBI" id="CHEBI:18420"/>
    </ligand>
</feature>
<feature type="binding site" evidence="1">
    <location>
        <position position="205"/>
    </location>
    <ligand>
        <name>Mg(2+)</name>
        <dbReference type="ChEBI" id="CHEBI:18420"/>
    </ligand>
</feature>
<feature type="binding site" evidence="1">
    <location>
        <position position="206"/>
    </location>
    <ligand>
        <name>Mg(2+)</name>
        <dbReference type="ChEBI" id="CHEBI:18420"/>
    </ligand>
</feature>
<feature type="binding site" evidence="1">
    <location>
        <position position="296"/>
    </location>
    <ligand>
        <name>substrate</name>
    </ligand>
</feature>
<feature type="binding site" evidence="1">
    <location>
        <position position="328"/>
    </location>
    <ligand>
        <name>substrate</name>
    </ligand>
</feature>
<feature type="binding site" evidence="1">
    <location>
        <position position="380"/>
    </location>
    <ligand>
        <name>substrate</name>
    </ligand>
</feature>
<feature type="site" description="Transition state stabilizer" evidence="1">
    <location>
        <position position="335"/>
    </location>
</feature>
<feature type="modified residue" description="N6-carboxylysine" evidence="1">
    <location>
        <position position="203"/>
    </location>
</feature>
<proteinExistence type="inferred from homology"/>
<keyword id="KW-0113">Calvin cycle</keyword>
<keyword id="KW-0120">Carbon dioxide fixation</keyword>
<keyword id="KW-0456">Lyase</keyword>
<keyword id="KW-0460">Magnesium</keyword>
<keyword id="KW-0479">Metal-binding</keyword>
<keyword id="KW-0503">Monooxygenase</keyword>
<keyword id="KW-0560">Oxidoreductase</keyword>
<keyword id="KW-0602">Photosynthesis</keyword>
<keyword id="KW-1185">Reference proteome</keyword>